<proteinExistence type="evidence at transcript level"/>
<sequence length="387" mass="45046">MLSRKKTKNEVSKPAEVQGKYVKKETSPLLRNLMPSFIRHGPTIPRRTDLCLPESSASAFSASGDGVVSRNQSFLRTPVQRTPHEVMRRESNRLSAPSSYLVRSLADVPREYGSSQSFLTEVNFAVENGDSGSRYFYSDNFFDGQRRRPLGDRAQEDYRYYEYNHDLFQRMPQNQGRHTSGIGRVTATSLGNLTNHGSEDLPLPPGWSVDWTMRGRKYYIDHNTNTTHWSHPLEREGLPPGWERVESSEFGTYYVDHTNKRAQYRHPCAPSVPRYDQPPPITYQPQQTERNQSLLVPANPYHTAEIPDWLQVYARAPVKYDHILKWELFQLADLDTYQGMLKLLFMKELEQIVKLYEAYRQALVTELENRKQRQQWYAQHHGKKFLS</sequence>
<evidence type="ECO:0000250" key="1"/>
<evidence type="ECO:0000250" key="2">
    <source>
        <dbReference type="UniProtKB" id="Q8VEB2"/>
    </source>
</evidence>
<evidence type="ECO:0000250" key="3">
    <source>
        <dbReference type="UniProtKB" id="Q9H4B6"/>
    </source>
</evidence>
<evidence type="ECO:0000255" key="4">
    <source>
        <dbReference type="PROSITE-ProRule" id="PRU00224"/>
    </source>
</evidence>
<evidence type="ECO:0000255" key="5">
    <source>
        <dbReference type="PROSITE-ProRule" id="PRU00310"/>
    </source>
</evidence>
<evidence type="ECO:0000312" key="6">
    <source>
        <dbReference type="EMBL" id="CAJ98868.1"/>
    </source>
</evidence>
<keyword id="KW-0963">Cytoplasm</keyword>
<keyword id="KW-0539">Nucleus</keyword>
<keyword id="KW-0597">Phosphoprotein</keyword>
<keyword id="KW-1185">Reference proteome</keyword>
<keyword id="KW-0677">Repeat</keyword>
<dbReference type="EMBL" id="AM261215">
    <property type="protein sequence ID" value="CAJ98868.1"/>
    <property type="molecule type" value="mRNA"/>
</dbReference>
<dbReference type="RefSeq" id="NP_001091050.1">
    <property type="nucleotide sequence ID" value="NM_001097581.1"/>
</dbReference>
<dbReference type="SMR" id="A4V8B4"/>
<dbReference type="FunCoup" id="A4V8B4">
    <property type="interactions" value="1871"/>
</dbReference>
<dbReference type="STRING" id="10116.ENSRNOP00000007314"/>
<dbReference type="PhosphoSitePlus" id="A4V8B4"/>
<dbReference type="PaxDb" id="10116-ENSRNOP00000007314"/>
<dbReference type="Ensembl" id="ENSRNOT00000007314.7">
    <property type="protein sequence ID" value="ENSRNOP00000007314.4"/>
    <property type="gene ID" value="ENSRNOG00000005264.7"/>
</dbReference>
<dbReference type="GeneID" id="299116"/>
<dbReference type="KEGG" id="rno:299116"/>
<dbReference type="UCSC" id="RGD:1307253">
    <property type="organism name" value="rat"/>
</dbReference>
<dbReference type="AGR" id="RGD:1307253"/>
<dbReference type="CTD" id="60485"/>
<dbReference type="RGD" id="1307253">
    <property type="gene designation" value="Sav1"/>
</dbReference>
<dbReference type="eggNOG" id="KOG1891">
    <property type="taxonomic scope" value="Eukaryota"/>
</dbReference>
<dbReference type="GeneTree" id="ENSGT00940000156106"/>
<dbReference type="HOGENOM" id="CLU_060422_0_0_1"/>
<dbReference type="InParanoid" id="A4V8B4"/>
<dbReference type="OMA" id="AARYYYP"/>
<dbReference type="OrthoDB" id="5339429at2759"/>
<dbReference type="PhylomeDB" id="A4V8B4"/>
<dbReference type="TreeFam" id="TF317631"/>
<dbReference type="Reactome" id="R-RNO-2028269">
    <property type="pathway name" value="Signaling by Hippo"/>
</dbReference>
<dbReference type="PRO" id="PR:A4V8B4"/>
<dbReference type="Proteomes" id="UP000002494">
    <property type="component" value="Chromosome 6"/>
</dbReference>
<dbReference type="Bgee" id="ENSRNOG00000005264">
    <property type="expression patterns" value="Expressed in lung and 19 other cell types or tissues"/>
</dbReference>
<dbReference type="ExpressionAtlas" id="A4V8B4">
    <property type="expression patterns" value="baseline and differential"/>
</dbReference>
<dbReference type="GO" id="GO:0005737">
    <property type="term" value="C:cytoplasm"/>
    <property type="evidence" value="ECO:0000250"/>
    <property type="project" value="UniProtKB"/>
</dbReference>
<dbReference type="GO" id="GO:0005829">
    <property type="term" value="C:cytosol"/>
    <property type="evidence" value="ECO:0000318"/>
    <property type="project" value="GO_Central"/>
</dbReference>
<dbReference type="GO" id="GO:0005634">
    <property type="term" value="C:nucleus"/>
    <property type="evidence" value="ECO:0000250"/>
    <property type="project" value="UniProtKB"/>
</dbReference>
<dbReference type="GO" id="GO:0042802">
    <property type="term" value="F:identical protein binding"/>
    <property type="evidence" value="ECO:0000266"/>
    <property type="project" value="RGD"/>
</dbReference>
<dbReference type="GO" id="GO:0060090">
    <property type="term" value="F:molecular adaptor activity"/>
    <property type="evidence" value="ECO:0007669"/>
    <property type="project" value="InterPro"/>
</dbReference>
<dbReference type="GO" id="GO:0043539">
    <property type="term" value="F:protein serine/threonine kinase activator activity"/>
    <property type="evidence" value="ECO:0000266"/>
    <property type="project" value="RGD"/>
</dbReference>
<dbReference type="GO" id="GO:0140537">
    <property type="term" value="F:transcription regulator activator activity"/>
    <property type="evidence" value="ECO:0000266"/>
    <property type="project" value="RGD"/>
</dbReference>
<dbReference type="GO" id="GO:0060038">
    <property type="term" value="P:cardiac muscle cell proliferation"/>
    <property type="evidence" value="ECO:0000266"/>
    <property type="project" value="RGD"/>
</dbReference>
<dbReference type="GO" id="GO:0050673">
    <property type="term" value="P:epithelial cell proliferation"/>
    <property type="evidence" value="ECO:0000266"/>
    <property type="project" value="RGD"/>
</dbReference>
<dbReference type="GO" id="GO:0001942">
    <property type="term" value="P:hair follicle development"/>
    <property type="evidence" value="ECO:0000266"/>
    <property type="project" value="RGD"/>
</dbReference>
<dbReference type="GO" id="GO:0035329">
    <property type="term" value="P:hippo signaling"/>
    <property type="evidence" value="ECO:0000250"/>
    <property type="project" value="UniProtKB"/>
</dbReference>
<dbReference type="GO" id="GO:0060575">
    <property type="term" value="P:intestinal epithelial cell differentiation"/>
    <property type="evidence" value="ECO:0000266"/>
    <property type="project" value="RGD"/>
</dbReference>
<dbReference type="GO" id="GO:0097283">
    <property type="term" value="P:keratinocyte apoptotic process"/>
    <property type="evidence" value="ECO:0000266"/>
    <property type="project" value="RGD"/>
</dbReference>
<dbReference type="GO" id="GO:0030216">
    <property type="term" value="P:keratinocyte differentiation"/>
    <property type="evidence" value="ECO:0000266"/>
    <property type="project" value="RGD"/>
</dbReference>
<dbReference type="GO" id="GO:0060487">
    <property type="term" value="P:lung epithelial cell differentiation"/>
    <property type="evidence" value="ECO:0000266"/>
    <property type="project" value="RGD"/>
</dbReference>
<dbReference type="GO" id="GO:0060044">
    <property type="term" value="P:negative regulation of cardiac muscle cell proliferation"/>
    <property type="evidence" value="ECO:0000266"/>
    <property type="project" value="RGD"/>
</dbReference>
<dbReference type="GO" id="GO:0008285">
    <property type="term" value="P:negative regulation of cell population proliferation"/>
    <property type="evidence" value="ECO:0000318"/>
    <property type="project" value="GO_Central"/>
</dbReference>
<dbReference type="GO" id="GO:0050680">
    <property type="term" value="P:negative regulation of epithelial cell proliferation"/>
    <property type="evidence" value="ECO:0000266"/>
    <property type="project" value="RGD"/>
</dbReference>
<dbReference type="GO" id="GO:0043065">
    <property type="term" value="P:positive regulation of apoptotic process"/>
    <property type="evidence" value="ECO:0000318"/>
    <property type="project" value="GO_Central"/>
</dbReference>
<dbReference type="GO" id="GO:0045600">
    <property type="term" value="P:positive regulation of fat cell differentiation"/>
    <property type="evidence" value="ECO:0000266"/>
    <property type="project" value="RGD"/>
</dbReference>
<dbReference type="GO" id="GO:1902174">
    <property type="term" value="P:positive regulation of keratinocyte apoptotic process"/>
    <property type="evidence" value="ECO:0000266"/>
    <property type="project" value="RGD"/>
</dbReference>
<dbReference type="GO" id="GO:0050821">
    <property type="term" value="P:protein stabilization"/>
    <property type="evidence" value="ECO:0000266"/>
    <property type="project" value="RGD"/>
</dbReference>
<dbReference type="GO" id="GO:0046620">
    <property type="term" value="P:regulation of organ growth"/>
    <property type="evidence" value="ECO:0000266"/>
    <property type="project" value="RGD"/>
</dbReference>
<dbReference type="GO" id="GO:2000036">
    <property type="term" value="P:regulation of stem cell population maintenance"/>
    <property type="evidence" value="ECO:0000266"/>
    <property type="project" value="RGD"/>
</dbReference>
<dbReference type="GO" id="GO:0060412">
    <property type="term" value="P:ventricular septum morphogenesis"/>
    <property type="evidence" value="ECO:0000266"/>
    <property type="project" value="RGD"/>
</dbReference>
<dbReference type="CDD" id="cd21433">
    <property type="entry name" value="SARAH_Sav"/>
    <property type="match status" value="1"/>
</dbReference>
<dbReference type="CDD" id="cd00201">
    <property type="entry name" value="WW"/>
    <property type="match status" value="2"/>
</dbReference>
<dbReference type="FunFam" id="2.20.70.10:FF:000030">
    <property type="entry name" value="Salvador family WW domain-containing protein 1"/>
    <property type="match status" value="1"/>
</dbReference>
<dbReference type="FunFam" id="2.20.70.10:FF:000035">
    <property type="entry name" value="Salvador homolog 1 (Drosophila)"/>
    <property type="match status" value="1"/>
</dbReference>
<dbReference type="Gene3D" id="2.20.70.10">
    <property type="match status" value="2"/>
</dbReference>
<dbReference type="InterPro" id="IPR011524">
    <property type="entry name" value="SARAH_dom"/>
</dbReference>
<dbReference type="InterPro" id="IPR030030">
    <property type="entry name" value="Sav"/>
</dbReference>
<dbReference type="InterPro" id="IPR001202">
    <property type="entry name" value="WW_dom"/>
</dbReference>
<dbReference type="InterPro" id="IPR036020">
    <property type="entry name" value="WW_dom_sf"/>
</dbReference>
<dbReference type="PANTHER" id="PTHR47522:SF2">
    <property type="entry name" value="PROTEIN SALVADOR HOMOLOG 1"/>
    <property type="match status" value="1"/>
</dbReference>
<dbReference type="PANTHER" id="PTHR47522">
    <property type="entry name" value="SALVADOR FAMILY WW DOMAIN-CONTAINING PROTEIN 1"/>
    <property type="match status" value="1"/>
</dbReference>
<dbReference type="Pfam" id="PF00397">
    <property type="entry name" value="WW"/>
    <property type="match status" value="1"/>
</dbReference>
<dbReference type="SMART" id="SM00456">
    <property type="entry name" value="WW"/>
    <property type="match status" value="2"/>
</dbReference>
<dbReference type="SUPFAM" id="SSF51045">
    <property type="entry name" value="WW domain"/>
    <property type="match status" value="2"/>
</dbReference>
<dbReference type="PROSITE" id="PS50951">
    <property type="entry name" value="SARAH"/>
    <property type="match status" value="1"/>
</dbReference>
<dbReference type="PROSITE" id="PS50020">
    <property type="entry name" value="WW_DOMAIN_2"/>
    <property type="match status" value="2"/>
</dbReference>
<comment type="function">
    <text evidence="1">Regulator of STK3/MST2 and STK4/MST1 in the Hippo signaling pathway which plays a pivotal role in organ size control and tumor suppression by restricting proliferation and promoting apoptosis. The core of this pathway is composed of a kinase cascade wherein STK3/MST2 and STK4/MST1, in complex with its regulatory protein SAV1, phosphorylates and activates LATS1/2 in complex with its regulatory protein MOB1, which in turn phosphorylates and inactivates YAP1 oncoprotein and WWTR1/TAZ. Phosphorylation of YAP1 by LATS1/2 inhibits its translocation into the nucleus to regulate cellular genes important for cell proliferation, cell death, and cell migration. SAV1 is required for STK3/MST2 and STK4/MST1 activation and promotes cell-cycle exit and terminal differentiation in developing epithelial tissues. Plays a role in centrosome disjunction by regulating the localization of NEK2 to centrosomes, and its ability to phosphorylate CROCC and CEP250. In conjunction with STK3/MST2, activates the transcriptional activity of ESR1 through the modulation of its phosphorylation (By similarity).</text>
</comment>
<comment type="subunit">
    <text evidence="3">Homodimer. Stabilized through interaction with STK3/MST2 or STK4/MST1. Interacts (via SARAH domain) with isoform 1 of NEK2. Interacts with ESR1 only in the presence of STK3/MST2. Interacts with WTIP and AJUBA.</text>
</comment>
<comment type="subcellular location">
    <subcellularLocation>
        <location evidence="1">Nucleus</location>
    </subcellularLocation>
    <subcellularLocation>
        <location evidence="1">Cytoplasm</location>
    </subcellularLocation>
</comment>
<comment type="PTM">
    <text evidence="1">Phosphorylated by STK3/MST2 and STK4/MST1. Phosphorylation is not required for SAV1 stability and may increase the number of protein binding sites on the scaffold molecule (By similarity).</text>
</comment>
<name>SAV1_RAT</name>
<feature type="chain" id="PRO_0000308165" description="Protein salvador homolog 1">
    <location>
        <begin position="1"/>
        <end position="387"/>
    </location>
</feature>
<feature type="domain" description="WW 1" evidence="4">
    <location>
        <begin position="201"/>
        <end position="234"/>
    </location>
</feature>
<feature type="domain" description="WW 2" evidence="4">
    <location>
        <begin position="236"/>
        <end position="269"/>
    </location>
</feature>
<feature type="domain" description="SARAH" evidence="5">
    <location>
        <begin position="323"/>
        <end position="370"/>
    </location>
</feature>
<feature type="modified residue" description="Phosphoserine" evidence="3">
    <location>
        <position position="95"/>
    </location>
</feature>
<feature type="modified residue" description="Phosphoserine" evidence="2">
    <location>
        <position position="138"/>
    </location>
</feature>
<feature type="modified residue" description="Phosphothreonine" evidence="3">
    <location>
        <position position="212"/>
    </location>
</feature>
<reference evidence="6" key="1">
    <citation type="submission" date="2006-04" db="EMBL/GenBank/DDBJ databases">
        <title>WW45 expression is upregulated upon T cell activation and its targeted downregulation in activated T cells decreases T cell-mediated bone resorption in experimental periodontal disease in rats.</title>
        <authorList>
            <person name="Valverde P."/>
        </authorList>
    </citation>
    <scope>NUCLEOTIDE SEQUENCE [MRNA]</scope>
    <source>
        <strain evidence="6">Rowett</strain>
        <tissue evidence="6">Heart</tissue>
    </source>
</reference>
<gene>
    <name evidence="6" type="primary">Sav1</name>
    <name type="synonym">Ww45</name>
</gene>
<protein>
    <recommendedName>
        <fullName>Protein salvador homolog 1</fullName>
    </recommendedName>
    <alternativeName>
        <fullName>45 kDa WW domain protein</fullName>
        <shortName>rWW45</shortName>
    </alternativeName>
</protein>
<accession>A4V8B4</accession>
<organism>
    <name type="scientific">Rattus norvegicus</name>
    <name type="common">Rat</name>
    <dbReference type="NCBI Taxonomy" id="10116"/>
    <lineage>
        <taxon>Eukaryota</taxon>
        <taxon>Metazoa</taxon>
        <taxon>Chordata</taxon>
        <taxon>Craniata</taxon>
        <taxon>Vertebrata</taxon>
        <taxon>Euteleostomi</taxon>
        <taxon>Mammalia</taxon>
        <taxon>Eutheria</taxon>
        <taxon>Euarchontoglires</taxon>
        <taxon>Glires</taxon>
        <taxon>Rodentia</taxon>
        <taxon>Myomorpha</taxon>
        <taxon>Muroidea</taxon>
        <taxon>Muridae</taxon>
        <taxon>Murinae</taxon>
        <taxon>Rattus</taxon>
    </lineage>
</organism>